<dbReference type="EC" id="2.7.7.50"/>
<dbReference type="EC" id="2.1.1.56"/>
<dbReference type="EMBL" id="AF389465">
    <property type="protein sequence ID" value="AAK73523.1"/>
    <property type="molecule type" value="Genomic_RNA"/>
</dbReference>
<dbReference type="RefSeq" id="NP_149149.1">
    <property type="nucleotide sequence ID" value="NC_003019.1"/>
</dbReference>
<dbReference type="SMR" id="Q91ID8"/>
<dbReference type="KEGG" id="vg:2598191"/>
<dbReference type="Proteomes" id="UP000006712">
    <property type="component" value="Genome"/>
</dbReference>
<dbReference type="GO" id="GO:0039624">
    <property type="term" value="C:viral outer capsid"/>
    <property type="evidence" value="ECO:0007669"/>
    <property type="project" value="UniProtKB-KW"/>
</dbReference>
<dbReference type="GO" id="GO:0005524">
    <property type="term" value="F:ATP binding"/>
    <property type="evidence" value="ECO:0007669"/>
    <property type="project" value="UniProtKB-KW"/>
</dbReference>
<dbReference type="GO" id="GO:0005525">
    <property type="term" value="F:GTP binding"/>
    <property type="evidence" value="ECO:0007669"/>
    <property type="project" value="UniProtKB-KW"/>
</dbReference>
<dbReference type="GO" id="GO:0004482">
    <property type="term" value="F:mRNA 5'-cap (guanine-N7-)-methyltransferase activity"/>
    <property type="evidence" value="ECO:0007669"/>
    <property type="project" value="UniProtKB-EC"/>
</dbReference>
<dbReference type="GO" id="GO:0004484">
    <property type="term" value="F:mRNA guanylyltransferase activity"/>
    <property type="evidence" value="ECO:0007669"/>
    <property type="project" value="UniProtKB-EC"/>
</dbReference>
<dbReference type="InterPro" id="IPR048605">
    <property type="entry name" value="Reov_VP3_bridge"/>
</dbReference>
<dbReference type="InterPro" id="IPR048608">
    <property type="entry name" value="Reov_VP3_GTase"/>
</dbReference>
<dbReference type="InterPro" id="IPR048607">
    <property type="entry name" value="Reov_VP3_MTase1"/>
</dbReference>
<dbReference type="InterPro" id="IPR048606">
    <property type="entry name" value="Reov_VP3_MTase2"/>
</dbReference>
<dbReference type="Pfam" id="PF20790">
    <property type="entry name" value="Reov_VP3_GTase"/>
    <property type="match status" value="1"/>
</dbReference>
<dbReference type="Pfam" id="PF20831">
    <property type="entry name" value="Reov_VP3_MTase1"/>
    <property type="match status" value="1"/>
</dbReference>
<dbReference type="Pfam" id="PF20832">
    <property type="entry name" value="Reov_VP3_MTase2"/>
    <property type="match status" value="1"/>
</dbReference>
<dbReference type="Pfam" id="PF20830">
    <property type="entry name" value="Reovirus_bridge"/>
    <property type="match status" value="1"/>
</dbReference>
<gene>
    <name type="primary">S4</name>
</gene>
<organism>
    <name type="scientific">Lymantria dispar cypovirus 1 (isolate Rao)</name>
    <name type="common">LdCPV-1</name>
    <dbReference type="NCBI Taxonomy" id="648169"/>
    <lineage>
        <taxon>Viruses</taxon>
        <taxon>Riboviria</taxon>
        <taxon>Orthornavirae</taxon>
        <taxon>Duplornaviricota</taxon>
        <taxon>Resentoviricetes</taxon>
        <taxon>Reovirales</taxon>
        <taxon>Spinareoviridae</taxon>
        <taxon>Cypovirus</taxon>
        <taxon>Cypovirus 1</taxon>
    </lineage>
</organism>
<accession>Q91ID8</accession>
<reference key="1">
    <citation type="submission" date="2001-06" db="EMBL/GenBank/DDBJ databases">
        <title>Identification of dsRNA electrophoretypes of two cypoviruses from a dual infection in gypsy moth, Lymantria dispar.</title>
        <authorList>
            <person name="Rao S."/>
            <person name="Shapiro M."/>
            <person name="Lynn D."/>
            <person name="Hagiwara K."/>
            <person name="Blackmon B."/>
            <person name="Fang G."/>
            <person name="Carner G.R."/>
        </authorList>
    </citation>
    <scope>NUCLEOTIDE SEQUENCE [GENOMIC RNA]</scope>
</reference>
<sequence>MWHYTSINNDTRVALDPKPNQIRTITKPNTVPQLGTDYLYTFNPQRRSHTLRLLGPFQYFNFSETDRGHPLFRLPLKYPSKTIPTDELVDNLHSWMRSVHLLHTRSDDNSLRYNWMLGVYARSTNYTTPVGQLVVKTPAILNYANPQDAFNSVFIALGIDYIDIPITNSNIFDDGSTPYNVRIWHAPTMTEVNHILTLMRKSTLVSTHSSWHWNVLHTFHYRSESDMIDHFSAKILEDWRQKEKFDKGALVEADRVIQRLIPLSSSTYVQRLAAIGALYPNEFTENVLDLSRLSTALLQLSDTYYQHANDQLKRLYRRMYNDSRTLYMTARHQELLLAQVAANPNILLYPYTHIFTTAHITASYISNTGQGRIKHSLAVTGTTEHSTVPDIILGPTSEDVITISMVEPMSIAAEDMYGYVIDTPTRDIWPADEQVEQKGDAVALYDTKTSRALGMFNNTVRIDDLLSPLLGRVYRTYAKGDTMAMTQGSLDHQTLCAAVDSDITFVGNRMIAPLAEGYVPRAMHRNNSTMKMLSLYVAIKKLENFAANSYLMSPDTSIILLGAEREPAVNILRRFNSSVSNVRIIGMGDRAVEPNIRVRVPFPIDKNISADFVICDINSYEDQSFESMFGETMSVVTTCASAATRSLVKINHPSEYMINSVIERLSKLGGVFYHTALLKTASQNTYSYETYIYITPIAAAVGFLFYNNSAIINRYMTAVADDEAPVIPSIHTIIKEHSNTYSPGLFCGCIDVQSAPLALSQLKSYCSEATTWRVDSDDNLVNIIARIDPARIALEFRTRSNTSAHHEYQRCVPNGLGFKIRKTREFRYMHREVTFIHKLMMYALIREQISLTESMTQVVSIGGRNLADISVVPLTMKYIVIDPAARIETLTQEKKNIEIQARAFQFDASTMDLENNSIYLFIAVIMNEPNGAATPAQTQIDKIRNVATAMLTRTNCVAYISFYESGIITRLSQSTAHKTIRVEDGRLKVANYVPVDTLPEADVTLMLRDIGITYEIIRPSTPELVNACSSYGIRLGSTGGAVLDVFNHYSPVIKLVRS</sequence>
<name>VP4_LDCPR</name>
<feature type="chain" id="PRO_0000403207" description="Outer capsid protein VP4">
    <location>
        <begin position="1"/>
        <end position="1058"/>
    </location>
</feature>
<proteinExistence type="inferred from homology"/>
<evidence type="ECO:0000250" key="1"/>
<evidence type="ECO:0000305" key="2"/>
<protein>
    <recommendedName>
        <fullName>Outer capsid protein VP4</fullName>
    </recommendedName>
    <domain>
        <recommendedName>
            <fullName>mRNA guanylyltransferase</fullName>
            <ecNumber>2.7.7.50</ecNumber>
        </recommendedName>
    </domain>
    <domain>
        <recommendedName>
            <fullName>mRNA (guanine-N(7))-methyltransferase</fullName>
            <ecNumber>2.1.1.56</ecNumber>
        </recommendedName>
    </domain>
</protein>
<comment type="function">
    <text evidence="1">Outer capsid protein involved in mRNA capping. Catalyzes the last 3 enzymatic activities for formation of the 5' cap structure on the viral plus-strand transcripts, namely the RNA guanylyltransferase, RNA-7N- and RNA-2'O-methyltransferase activities (By similarity).</text>
</comment>
<comment type="catalytic activity">
    <reaction>
        <text>a 5'-end diphospho-ribonucleoside in mRNA + GTP + H(+) = a 5'-end (5'-triphosphoguanosine)-ribonucleoside in mRNA + diphosphate</text>
        <dbReference type="Rhea" id="RHEA:67012"/>
        <dbReference type="Rhea" id="RHEA-COMP:17165"/>
        <dbReference type="Rhea" id="RHEA-COMP:17166"/>
        <dbReference type="ChEBI" id="CHEBI:15378"/>
        <dbReference type="ChEBI" id="CHEBI:33019"/>
        <dbReference type="ChEBI" id="CHEBI:37565"/>
        <dbReference type="ChEBI" id="CHEBI:167616"/>
        <dbReference type="ChEBI" id="CHEBI:167617"/>
        <dbReference type="EC" id="2.7.7.50"/>
    </reaction>
</comment>
<comment type="catalytic activity">
    <reaction>
        <text>a 5'-end (5'-triphosphoguanosine)-ribonucleoside in mRNA + S-adenosyl-L-methionine = a 5'-end (N(7)-methyl 5'-triphosphoguanosine)-ribonucleoside in mRNA + S-adenosyl-L-homocysteine</text>
        <dbReference type="Rhea" id="RHEA:67008"/>
        <dbReference type="Rhea" id="RHEA-COMP:17166"/>
        <dbReference type="Rhea" id="RHEA-COMP:17167"/>
        <dbReference type="ChEBI" id="CHEBI:57856"/>
        <dbReference type="ChEBI" id="CHEBI:59789"/>
        <dbReference type="ChEBI" id="CHEBI:156461"/>
        <dbReference type="ChEBI" id="CHEBI:167617"/>
        <dbReference type="EC" id="2.1.1.56"/>
    </reaction>
</comment>
<comment type="subcellular location">
    <subcellularLocation>
        <location evidence="2">Virion</location>
    </subcellularLocation>
</comment>
<comment type="similarity">
    <text evidence="2">Belongs to the orthoreovirus lambda-2 protein family.</text>
</comment>
<keyword id="KW-0067">ATP-binding</keyword>
<keyword id="KW-0167">Capsid protein</keyword>
<keyword id="KW-0342">GTP-binding</keyword>
<keyword id="KW-0489">Methyltransferase</keyword>
<keyword id="KW-0506">mRNA capping</keyword>
<keyword id="KW-0507">mRNA processing</keyword>
<keyword id="KW-0511">Multifunctional enzyme</keyword>
<keyword id="KW-0547">Nucleotide-binding</keyword>
<keyword id="KW-0548">Nucleotidyltransferase</keyword>
<keyword id="KW-1152">Outer capsid protein</keyword>
<keyword id="KW-1185">Reference proteome</keyword>
<keyword id="KW-0949">S-adenosyl-L-methionine</keyword>
<keyword id="KW-0808">Transferase</keyword>
<keyword id="KW-0946">Virion</keyword>
<organismHost>
    <name type="scientific">Lymantria dispar</name>
    <name type="common">Gypsy moth</name>
    <name type="synonym">Porthetria dispar</name>
    <dbReference type="NCBI Taxonomy" id="13123"/>
</organismHost>